<evidence type="ECO:0000250" key="1"/>
<evidence type="ECO:0000250" key="2">
    <source>
        <dbReference type="UniProtKB" id="O43148"/>
    </source>
</evidence>
<evidence type="ECO:0000255" key="3">
    <source>
        <dbReference type="PROSITE-ProRule" id="PRU00895"/>
    </source>
</evidence>
<evidence type="ECO:0000256" key="4">
    <source>
        <dbReference type="SAM" id="MobiDB-lite"/>
    </source>
</evidence>
<evidence type="ECO:0000269" key="5">
    <source>
    </source>
</evidence>
<evidence type="ECO:0000305" key="6"/>
<comment type="function">
    <text evidence="5">Responsible for methylating the 5'-cap structure of mRNAs.</text>
</comment>
<comment type="catalytic activity">
    <reaction evidence="2 3">
        <text>a 5'-end (5'-triphosphoguanosine)-ribonucleoside in mRNA + S-adenosyl-L-methionine = a 5'-end (N(7)-methyl 5'-triphosphoguanosine)-ribonucleoside in mRNA + S-adenosyl-L-homocysteine</text>
        <dbReference type="Rhea" id="RHEA:67008"/>
        <dbReference type="Rhea" id="RHEA-COMP:17166"/>
        <dbReference type="Rhea" id="RHEA-COMP:17167"/>
        <dbReference type="ChEBI" id="CHEBI:57856"/>
        <dbReference type="ChEBI" id="CHEBI:59789"/>
        <dbReference type="ChEBI" id="CHEBI:156461"/>
        <dbReference type="ChEBI" id="CHEBI:167617"/>
        <dbReference type="EC" id="2.1.1.56"/>
    </reaction>
</comment>
<comment type="subcellular location">
    <subcellularLocation>
        <location evidence="1">Nucleus</location>
    </subcellularLocation>
</comment>
<comment type="similarity">
    <text evidence="3">Belongs to the class I-like SAM-binding methyltransferase superfamily. mRNA cap 0 methyltransferase family.</text>
</comment>
<name>MCES_CANAL</name>
<reference key="1">
    <citation type="journal article" date="1999" name="J. Biol. Chem.">
        <title>Characterization of human, Schizosaccharomyces pombe, and Candida albicans mRNA cap methyltransferases and complete replacement of the yeast capping apparatus by mammalian enzymes.</title>
        <authorList>
            <person name="Saha N."/>
            <person name="Schwer B."/>
            <person name="Shuman S."/>
        </authorList>
    </citation>
    <scope>NUCLEOTIDE SEQUENCE [GENOMIC DNA]</scope>
    <scope>FUNCTION</scope>
</reference>
<reference key="2">
    <citation type="journal article" date="2004" name="Proc. Natl. Acad. Sci. U.S.A.">
        <title>The diploid genome sequence of Candida albicans.</title>
        <authorList>
            <person name="Jones T."/>
            <person name="Federspiel N.A."/>
            <person name="Chibana H."/>
            <person name="Dungan J."/>
            <person name="Kalman S."/>
            <person name="Magee B.B."/>
            <person name="Newport G."/>
            <person name="Thorstenson Y.R."/>
            <person name="Agabian N."/>
            <person name="Magee P.T."/>
            <person name="Davis R.W."/>
            <person name="Scherer S."/>
        </authorList>
    </citation>
    <scope>NUCLEOTIDE SEQUENCE [LARGE SCALE GENOMIC DNA]</scope>
    <source>
        <strain>SC5314 / ATCC MYA-2876</strain>
    </source>
</reference>
<reference key="3">
    <citation type="journal article" date="2007" name="Genome Biol.">
        <title>Assembly of the Candida albicans genome into sixteen supercontigs aligned on the eight chromosomes.</title>
        <authorList>
            <person name="van het Hoog M."/>
            <person name="Rast T.J."/>
            <person name="Martchenko M."/>
            <person name="Grindle S."/>
            <person name="Dignard D."/>
            <person name="Hogues H."/>
            <person name="Cuomo C."/>
            <person name="Berriman M."/>
            <person name="Scherer S."/>
            <person name="Magee B.B."/>
            <person name="Whiteway M."/>
            <person name="Chibana H."/>
            <person name="Nantel A."/>
            <person name="Magee P.T."/>
        </authorList>
    </citation>
    <scope>GENOME REANNOTATION</scope>
    <source>
        <strain>SC5314 / ATCC MYA-2876</strain>
    </source>
</reference>
<reference key="4">
    <citation type="journal article" date="2013" name="Genome Biol.">
        <title>Assembly of a phased diploid Candida albicans genome facilitates allele-specific measurements and provides a simple model for repeat and indel structure.</title>
        <authorList>
            <person name="Muzzey D."/>
            <person name="Schwartz K."/>
            <person name="Weissman J.S."/>
            <person name="Sherlock G."/>
        </authorList>
    </citation>
    <scope>NUCLEOTIDE SEQUENCE [LARGE SCALE GENOMIC DNA]</scope>
    <scope>GENOME REANNOTATION</scope>
    <source>
        <strain>SC5314 / ATCC MYA-2876</strain>
    </source>
</reference>
<protein>
    <recommendedName>
        <fullName>mRNA cap guanine-N(7) methyltransferase</fullName>
        <ecNumber evidence="2">2.1.1.56</ecNumber>
    </recommendedName>
    <alternativeName>
        <fullName>mRNA (guanine-N(7))-methyltransferase</fullName>
    </alternativeName>
    <alternativeName>
        <fullName>mRNA cap methyltransferase</fullName>
    </alternativeName>
</protein>
<gene>
    <name type="primary">ABD1</name>
    <name type="synonym">CCM1</name>
    <name type="ordered locus">CAALFM_C307710WA</name>
    <name type="ORF">CaO19.14008</name>
    <name type="ORF">CaO19.6716</name>
</gene>
<sequence length="474" mass="54248">MSTDSYTPSQEPGSKRLKTGESVFARRGVSPSTGGVASAYGNESEKKPSWLQTNKSDIDGKYDKYGERRNAHTTTRDSRLDRLKRVRQKSAEREDVGHEGDEGDEDEGILPYIHLQAANPAIIHNEKQENYRTFQSRISNRENRDINSIVRAHYNQRTQQAKQQGSRVNSPIYKMRNFNNAIKYILLGNWAKHNPEELDLFSFLDLCCGKGGDLNKCQFIGIDQYIGIDIADLSVKEAFERYTKQKARFRHSNQNSNRYTFEACFATGDCFTQFVPDILEPNFPGIIERAFPVDIVSAQFSLHYSFESEEKVRTLLTNVTRSLRSGGTFIGTIPSSDFIKAKIVDKHLQRDEKGKAKFGNSLYSVTFEKDPPEDGVFRPAFGNKYNYWLKDAVDNVPEYVVPFETLRSLCEEYDLVLKYKKSFTDIFNQEIPKYFSKLNKNLIDGMKRSDGKYGAEGDEKEAVAFYIGFVFEKV</sequence>
<accession>Q5ADX5</accession>
<accession>A0A1D8PKV0</accession>
<accession>Q9P936</accession>
<accession>Q9Y8H4</accession>
<organism>
    <name type="scientific">Candida albicans (strain SC5314 / ATCC MYA-2876)</name>
    <name type="common">Yeast</name>
    <dbReference type="NCBI Taxonomy" id="237561"/>
    <lineage>
        <taxon>Eukaryota</taxon>
        <taxon>Fungi</taxon>
        <taxon>Dikarya</taxon>
        <taxon>Ascomycota</taxon>
        <taxon>Saccharomycotina</taxon>
        <taxon>Pichiomycetes</taxon>
        <taxon>Debaryomycetaceae</taxon>
        <taxon>Candida/Lodderomyces clade</taxon>
        <taxon>Candida</taxon>
    </lineage>
</organism>
<feature type="chain" id="PRO_0000303905" description="mRNA cap guanine-N(7) methyltransferase">
    <location>
        <begin position="1"/>
        <end position="474"/>
    </location>
</feature>
<feature type="domain" description="mRNA cap 0 methyltransferase" evidence="3">
    <location>
        <begin position="170"/>
        <end position="474"/>
    </location>
</feature>
<feature type="region of interest" description="Disordered" evidence="4">
    <location>
        <begin position="1"/>
        <end position="106"/>
    </location>
</feature>
<feature type="compositionally biased region" description="Polar residues" evidence="4">
    <location>
        <begin position="1"/>
        <end position="12"/>
    </location>
</feature>
<feature type="compositionally biased region" description="Basic and acidic residues" evidence="4">
    <location>
        <begin position="56"/>
        <end position="100"/>
    </location>
</feature>
<feature type="binding site" evidence="3">
    <location>
        <begin position="179"/>
        <end position="180"/>
    </location>
    <ligand>
        <name>mRNA</name>
        <dbReference type="ChEBI" id="CHEBI:33699"/>
    </ligand>
    <ligandPart>
        <name>mRNA cap</name>
    </ligandPart>
</feature>
<feature type="binding site" evidence="3">
    <location>
        <position position="183"/>
    </location>
    <ligand>
        <name>S-adenosyl-L-methionine</name>
        <dbReference type="ChEBI" id="CHEBI:59789"/>
    </ligand>
</feature>
<feature type="binding site" evidence="3">
    <location>
        <position position="207"/>
    </location>
    <ligand>
        <name>S-adenosyl-L-methionine</name>
        <dbReference type="ChEBI" id="CHEBI:59789"/>
    </ligand>
</feature>
<feature type="binding site" evidence="3">
    <location>
        <position position="229"/>
    </location>
    <ligand>
        <name>S-adenosyl-L-methionine</name>
        <dbReference type="ChEBI" id="CHEBI:59789"/>
    </ligand>
</feature>
<feature type="binding site" evidence="2">
    <location>
        <position position="269"/>
    </location>
    <ligand>
        <name>S-adenosyl-L-methionine</name>
        <dbReference type="ChEBI" id="CHEBI:59789"/>
    </ligand>
</feature>
<feature type="binding site" evidence="2">
    <location>
        <position position="299"/>
    </location>
    <ligand>
        <name>S-adenosyl-L-methionine</name>
        <dbReference type="ChEBI" id="CHEBI:59789"/>
    </ligand>
</feature>
<feature type="binding site" evidence="2">
    <location>
        <position position="304"/>
    </location>
    <ligand>
        <name>S-adenosyl-L-methionine</name>
        <dbReference type="ChEBI" id="CHEBI:59789"/>
    </ligand>
</feature>
<feature type="site" description="mRNA cap binding" evidence="3">
    <location>
        <position position="210"/>
    </location>
</feature>
<feature type="site" description="mRNA cap binding" evidence="3">
    <location>
        <position position="216"/>
    </location>
</feature>
<feature type="site" description="mRNA cap binding" evidence="3">
    <location>
        <position position="241"/>
    </location>
</feature>
<feature type="site" description="mRNA cap binding" evidence="3">
    <location>
        <position position="303"/>
    </location>
</feature>
<feature type="site" description="mRNA cap binding" evidence="3">
    <location>
        <position position="398"/>
    </location>
</feature>
<feature type="site" description="mRNA cap binding" evidence="3">
    <location>
        <position position="466"/>
    </location>
</feature>
<feature type="sequence conflict" description="In Ref. 2; BAA82446." evidence="6" ref="2">
    <original>V</original>
    <variation>A</variation>
    <location>
        <position position="86"/>
    </location>
</feature>
<feature type="sequence conflict" description="In Ref. 1; AAF69030." evidence="6" ref="1">
    <original>T</original>
    <variation>K</variation>
    <location>
        <position position="133"/>
    </location>
</feature>
<feature type="sequence conflict" description="In Ref. 2; BAA82446." evidence="6" ref="2">
    <original>I</original>
    <variation>V</variation>
    <location>
        <position position="295"/>
    </location>
</feature>
<dbReference type="EC" id="2.1.1.56" evidence="2"/>
<dbReference type="EMBL" id="AF133529">
    <property type="protein sequence ID" value="AAF69030.1"/>
    <property type="molecule type" value="Genomic_DNA"/>
</dbReference>
<dbReference type="EMBL" id="AB020965">
    <property type="protein sequence ID" value="BAA82446.1"/>
    <property type="molecule type" value="Genomic_DNA"/>
</dbReference>
<dbReference type="EMBL" id="CP017625">
    <property type="protein sequence ID" value="AOW28770.1"/>
    <property type="molecule type" value="Genomic_DNA"/>
</dbReference>
<dbReference type="RefSeq" id="XP_719815.1">
    <property type="nucleotide sequence ID" value="XM_714722.1"/>
</dbReference>
<dbReference type="SMR" id="Q5ADX5"/>
<dbReference type="FunCoup" id="Q5ADX5">
    <property type="interactions" value="1070"/>
</dbReference>
<dbReference type="STRING" id="237561.Q5ADX5"/>
<dbReference type="EnsemblFungi" id="C3_07710W_A-T">
    <property type="protein sequence ID" value="C3_07710W_A-T-p1"/>
    <property type="gene ID" value="C3_07710W_A"/>
</dbReference>
<dbReference type="GeneID" id="3638456"/>
<dbReference type="KEGG" id="cal:CAALFM_C307710WA"/>
<dbReference type="CGD" id="CAL0000182989">
    <property type="gene designation" value="ABD1"/>
</dbReference>
<dbReference type="VEuPathDB" id="FungiDB:C3_07710W_A"/>
<dbReference type="eggNOG" id="KOG1975">
    <property type="taxonomic scope" value="Eukaryota"/>
</dbReference>
<dbReference type="HOGENOM" id="CLU_020346_2_0_1"/>
<dbReference type="InParanoid" id="Q5ADX5"/>
<dbReference type="OMA" id="LITGDCF"/>
<dbReference type="OrthoDB" id="10248867at2759"/>
<dbReference type="PRO" id="PR:Q5ADX5"/>
<dbReference type="Proteomes" id="UP000000559">
    <property type="component" value="Chromosome 3"/>
</dbReference>
<dbReference type="GO" id="GO:0005829">
    <property type="term" value="C:cytosol"/>
    <property type="evidence" value="ECO:0007669"/>
    <property type="project" value="EnsemblFungi"/>
</dbReference>
<dbReference type="GO" id="GO:0005634">
    <property type="term" value="C:nucleus"/>
    <property type="evidence" value="ECO:0000318"/>
    <property type="project" value="GO_Central"/>
</dbReference>
<dbReference type="GO" id="GO:0004482">
    <property type="term" value="F:mRNA 5'-cap (guanine-N7-)-methyltransferase activity"/>
    <property type="evidence" value="ECO:0000314"/>
    <property type="project" value="CGD"/>
</dbReference>
<dbReference type="GO" id="GO:0003723">
    <property type="term" value="F:RNA binding"/>
    <property type="evidence" value="ECO:0007669"/>
    <property type="project" value="UniProtKB-KW"/>
</dbReference>
<dbReference type="GO" id="GO:0006370">
    <property type="term" value="P:7-methylguanosine mRNA capping"/>
    <property type="evidence" value="ECO:0000315"/>
    <property type="project" value="CGD"/>
</dbReference>
<dbReference type="CDD" id="cd02440">
    <property type="entry name" value="AdoMet_MTases"/>
    <property type="match status" value="1"/>
</dbReference>
<dbReference type="FunFam" id="3.40.50.150:FF:000280">
    <property type="entry name" value="mRNA cap guanine-N7 methyltransferase"/>
    <property type="match status" value="1"/>
</dbReference>
<dbReference type="Gene3D" id="3.40.50.150">
    <property type="entry name" value="Vaccinia Virus protein VP39"/>
    <property type="match status" value="1"/>
</dbReference>
<dbReference type="InterPro" id="IPR004971">
    <property type="entry name" value="mRNA_G-N7_MeTrfase_dom"/>
</dbReference>
<dbReference type="InterPro" id="IPR016899">
    <property type="entry name" value="mRNA_G-N7_MeTrfase_euk"/>
</dbReference>
<dbReference type="InterPro" id="IPR039753">
    <property type="entry name" value="RG7MT1"/>
</dbReference>
<dbReference type="InterPro" id="IPR029063">
    <property type="entry name" value="SAM-dependent_MTases_sf"/>
</dbReference>
<dbReference type="PANTHER" id="PTHR12189:SF2">
    <property type="entry name" value="MRNA CAP GUANINE-N7 METHYLTRANSFERASE"/>
    <property type="match status" value="1"/>
</dbReference>
<dbReference type="PANTHER" id="PTHR12189">
    <property type="entry name" value="MRNA GUANINE-7- METHYLTRANSFERASE"/>
    <property type="match status" value="1"/>
</dbReference>
<dbReference type="Pfam" id="PF03291">
    <property type="entry name" value="mRNA_G-N7_MeTrfase"/>
    <property type="match status" value="1"/>
</dbReference>
<dbReference type="PIRSF" id="PIRSF028762">
    <property type="entry name" value="ABD1"/>
    <property type="match status" value="1"/>
</dbReference>
<dbReference type="SUPFAM" id="SSF53335">
    <property type="entry name" value="S-adenosyl-L-methionine-dependent methyltransferases"/>
    <property type="match status" value="1"/>
</dbReference>
<dbReference type="PROSITE" id="PS51562">
    <property type="entry name" value="RNA_CAP0_MT"/>
    <property type="match status" value="1"/>
</dbReference>
<keyword id="KW-0489">Methyltransferase</keyword>
<keyword id="KW-0506">mRNA capping</keyword>
<keyword id="KW-0507">mRNA processing</keyword>
<keyword id="KW-0539">Nucleus</keyword>
<keyword id="KW-1185">Reference proteome</keyword>
<keyword id="KW-0694">RNA-binding</keyword>
<keyword id="KW-0949">S-adenosyl-L-methionine</keyword>
<keyword id="KW-0808">Transferase</keyword>
<proteinExistence type="inferred from homology"/>